<sequence>MSSESEKDKERLIQAAKMFFFHVQDLASVINTLTELFSRSMNTQILLMAVKNNSYIKDFFEQMLKIFKEMQSVVDARHDKIQKESLCSKVAMAMCSVVQKSTNVEELHQSAKEVFKSAHTPVIISVLNSSNILGSLESSLSHLMKFPIMNLQLSDFYTEDTKEQSDVTTSERTRSPPGSSKTTMIDTLKKLQDVLKTEDSKNPTKSAADLLEQIVKAMGPILEILQKAIKTMEMNISVFKKASDK</sequence>
<name>CL060_HUMAN</name>
<keyword id="KW-1267">Proteomics identification</keyword>
<keyword id="KW-1185">Reference proteome</keyword>
<dbReference type="EMBL" id="AK289942">
    <property type="protein sequence ID" value="BAF82631.1"/>
    <property type="molecule type" value="mRNA"/>
</dbReference>
<dbReference type="EMBL" id="BC015546">
    <property type="protein sequence ID" value="AAH15546.1"/>
    <property type="molecule type" value="mRNA"/>
</dbReference>
<dbReference type="EMBL" id="BC029443">
    <property type="protein sequence ID" value="AAH29443.1"/>
    <property type="molecule type" value="mRNA"/>
</dbReference>
<dbReference type="EMBL" id="BC038836">
    <property type="protein sequence ID" value="AAH38836.1"/>
    <property type="molecule type" value="mRNA"/>
</dbReference>
<dbReference type="CCDS" id="CCDS8667.1"/>
<dbReference type="RefSeq" id="NP_787070.2">
    <property type="nucleotide sequence ID" value="NM_175874.4"/>
</dbReference>
<dbReference type="RefSeq" id="XP_005253379.1">
    <property type="nucleotide sequence ID" value="XM_005253322.5"/>
</dbReference>
<dbReference type="RefSeq" id="XP_011518870.1">
    <property type="nucleotide sequence ID" value="XM_011520568.3"/>
</dbReference>
<dbReference type="RefSeq" id="XP_011518871.1">
    <property type="nucleotide sequence ID" value="XM_011520569.3"/>
</dbReference>
<dbReference type="RefSeq" id="XP_016874360.1">
    <property type="nucleotide sequence ID" value="XM_017018871.1"/>
</dbReference>
<dbReference type="RefSeq" id="XP_016874361.1">
    <property type="nucleotide sequence ID" value="XM_017018872.1"/>
</dbReference>
<dbReference type="RefSeq" id="XP_016874362.1">
    <property type="nucleotide sequence ID" value="XM_017018873.2"/>
</dbReference>
<dbReference type="RefSeq" id="XP_016874363.1">
    <property type="nucleotide sequence ID" value="XM_017018874.2"/>
</dbReference>
<dbReference type="RefSeq" id="XP_054227177.1">
    <property type="nucleotide sequence ID" value="XM_054371202.1"/>
</dbReference>
<dbReference type="RefSeq" id="XP_054227178.1">
    <property type="nucleotide sequence ID" value="XM_054371203.1"/>
</dbReference>
<dbReference type="RefSeq" id="XP_054227179.1">
    <property type="nucleotide sequence ID" value="XM_054371204.1"/>
</dbReference>
<dbReference type="RefSeq" id="XP_054227180.1">
    <property type="nucleotide sequence ID" value="XM_054371205.1"/>
</dbReference>
<dbReference type="RefSeq" id="XP_054227181.1">
    <property type="nucleotide sequence ID" value="XM_054371206.1"/>
</dbReference>
<dbReference type="SMR" id="Q5U649"/>
<dbReference type="BioGRID" id="126866">
    <property type="interactions" value="38"/>
</dbReference>
<dbReference type="FunCoup" id="Q5U649">
    <property type="interactions" value="11"/>
</dbReference>
<dbReference type="IntAct" id="Q5U649">
    <property type="interactions" value="2"/>
</dbReference>
<dbReference type="STRING" id="9606.ENSP00000331691"/>
<dbReference type="GlyGen" id="Q5U649">
    <property type="glycosylation" value="1 site, 1 O-linked glycan (1 site)"/>
</dbReference>
<dbReference type="iPTMnet" id="Q5U649"/>
<dbReference type="PhosphoSitePlus" id="Q5U649"/>
<dbReference type="BioMuta" id="C12orf60"/>
<dbReference type="DMDM" id="125863778"/>
<dbReference type="jPOST" id="Q5U649"/>
<dbReference type="MassIVE" id="Q5U649"/>
<dbReference type="PaxDb" id="9606-ENSP00000331691"/>
<dbReference type="PeptideAtlas" id="Q5U649"/>
<dbReference type="ProteomicsDB" id="65239"/>
<dbReference type="Antibodypedia" id="51929">
    <property type="antibodies" value="36 antibodies from 10 providers"/>
</dbReference>
<dbReference type="DNASU" id="144608"/>
<dbReference type="Ensembl" id="ENST00000330828.3">
    <property type="protein sequence ID" value="ENSP00000331691.2"/>
    <property type="gene ID" value="ENSG00000182993.5"/>
</dbReference>
<dbReference type="GeneID" id="144608"/>
<dbReference type="KEGG" id="hsa:144608"/>
<dbReference type="MANE-Select" id="ENST00000330828.3">
    <property type="protein sequence ID" value="ENSP00000331691.2"/>
    <property type="RefSeq nucleotide sequence ID" value="NM_175874.4"/>
    <property type="RefSeq protein sequence ID" value="NP_787070.2"/>
</dbReference>
<dbReference type="UCSC" id="uc001rcj.5">
    <property type="organism name" value="human"/>
</dbReference>
<dbReference type="AGR" id="HGNC:28726"/>
<dbReference type="CTD" id="144608"/>
<dbReference type="DisGeNET" id="144608"/>
<dbReference type="GeneCards" id="C12orf60"/>
<dbReference type="HGNC" id="HGNC:28726">
    <property type="gene designation" value="C12orf60"/>
</dbReference>
<dbReference type="HPA" id="ENSG00000182993">
    <property type="expression patterns" value="Tissue enhanced (testis)"/>
</dbReference>
<dbReference type="MalaCards" id="C12orf60"/>
<dbReference type="neXtProt" id="NX_Q5U649"/>
<dbReference type="OpenTargets" id="ENSG00000182993"/>
<dbReference type="PharmGKB" id="PA143485389"/>
<dbReference type="VEuPathDB" id="HostDB:ENSG00000182993"/>
<dbReference type="eggNOG" id="ENOG502S734">
    <property type="taxonomic scope" value="Eukaryota"/>
</dbReference>
<dbReference type="GeneTree" id="ENSGT00390000003800"/>
<dbReference type="HOGENOM" id="CLU_1124225_0_0_1"/>
<dbReference type="InParanoid" id="Q5U649"/>
<dbReference type="OMA" id="MKFPIMN"/>
<dbReference type="OrthoDB" id="6112619at2759"/>
<dbReference type="PAN-GO" id="Q5U649">
    <property type="GO annotations" value="0 GO annotations based on evolutionary models"/>
</dbReference>
<dbReference type="PhylomeDB" id="Q5U649"/>
<dbReference type="TreeFam" id="TF338464"/>
<dbReference type="PathwayCommons" id="Q5U649"/>
<dbReference type="SignaLink" id="Q5U649"/>
<dbReference type="BioGRID-ORCS" id="144608">
    <property type="hits" value="14 hits in 1103 CRISPR screens"/>
</dbReference>
<dbReference type="ChiTaRS" id="C12orf60">
    <property type="organism name" value="human"/>
</dbReference>
<dbReference type="GenomeRNAi" id="144608"/>
<dbReference type="Pharos" id="Q5U649">
    <property type="development level" value="Tdark"/>
</dbReference>
<dbReference type="PRO" id="PR:Q5U649"/>
<dbReference type="Proteomes" id="UP000005640">
    <property type="component" value="Chromosome 12"/>
</dbReference>
<dbReference type="RNAct" id="Q5U649">
    <property type="molecule type" value="protein"/>
</dbReference>
<dbReference type="Bgee" id="ENSG00000182993">
    <property type="expression patterns" value="Expressed in sperm and 133 other cell types or tissues"/>
</dbReference>
<dbReference type="InterPro" id="IPR027895">
    <property type="entry name" value="DUF4533"/>
</dbReference>
<dbReference type="PANTHER" id="PTHR36289">
    <property type="entry name" value="CHROMOSOME 12 OPEN READING FRAME 60"/>
    <property type="match status" value="1"/>
</dbReference>
<dbReference type="PANTHER" id="PTHR36289:SF1">
    <property type="entry name" value="CHROMOSOME 12 OPEN READING FRAME 60"/>
    <property type="match status" value="1"/>
</dbReference>
<dbReference type="Pfam" id="PF15047">
    <property type="entry name" value="DUF4533"/>
    <property type="match status" value="1"/>
</dbReference>
<proteinExistence type="evidence at protein level"/>
<gene>
    <name type="primary">C12orf60</name>
</gene>
<accession>Q5U649</accession>
<accession>A8K1M7</accession>
<accession>Q5XKK8</accession>
<accession>Q8IXY2</accession>
<comment type="interaction">
    <interactant intactId="EBI-10488839">
        <id>Q5U649</id>
    </interactant>
    <interactant intactId="EBI-953772">
        <id>Q96DN0</id>
        <label>ERP27</label>
    </interactant>
    <organismsDiffer>false</organismsDiffer>
    <experiments>3</experiments>
</comment>
<evidence type="ECO:0000256" key="1">
    <source>
        <dbReference type="SAM" id="MobiDB-lite"/>
    </source>
</evidence>
<evidence type="ECO:0000269" key="2">
    <source>
    </source>
</evidence>
<evidence type="ECO:0000305" key="3"/>
<feature type="chain" id="PRO_0000274271" description="Uncharacterized protein C12orf60">
    <location>
        <begin position="1"/>
        <end position="245"/>
    </location>
</feature>
<feature type="region of interest" description="Disordered" evidence="1">
    <location>
        <begin position="162"/>
        <end position="183"/>
    </location>
</feature>
<feature type="compositionally biased region" description="Basic and acidic residues" evidence="1">
    <location>
        <begin position="162"/>
        <end position="174"/>
    </location>
</feature>
<feature type="sequence variant" id="VAR_030226" description="In dbSNP:rs17853860." evidence="2">
    <original>K</original>
    <variation>R</variation>
    <location>
        <position position="51"/>
    </location>
</feature>
<feature type="sequence variant" id="VAR_030227" description="In dbSNP:rs7304054.">
    <original>K</original>
    <variation>R</variation>
    <location>
        <position position="65"/>
    </location>
</feature>
<feature type="sequence variant" id="VAR_030228" description="In dbSNP:rs7307438.">
    <original>N</original>
    <variation>K</variation>
    <location>
        <position position="103"/>
    </location>
</feature>
<feature type="sequence conflict" description="In Ref. 2; AAH29443." evidence="3" ref="2">
    <original>N</original>
    <variation>D</variation>
    <location>
        <position position="42"/>
    </location>
</feature>
<organism>
    <name type="scientific">Homo sapiens</name>
    <name type="common">Human</name>
    <dbReference type="NCBI Taxonomy" id="9606"/>
    <lineage>
        <taxon>Eukaryota</taxon>
        <taxon>Metazoa</taxon>
        <taxon>Chordata</taxon>
        <taxon>Craniata</taxon>
        <taxon>Vertebrata</taxon>
        <taxon>Euteleostomi</taxon>
        <taxon>Mammalia</taxon>
        <taxon>Eutheria</taxon>
        <taxon>Euarchontoglires</taxon>
        <taxon>Primates</taxon>
        <taxon>Haplorrhini</taxon>
        <taxon>Catarrhini</taxon>
        <taxon>Hominidae</taxon>
        <taxon>Homo</taxon>
    </lineage>
</organism>
<reference key="1">
    <citation type="journal article" date="2004" name="Nat. Genet.">
        <title>Complete sequencing and characterization of 21,243 full-length human cDNAs.</title>
        <authorList>
            <person name="Ota T."/>
            <person name="Suzuki Y."/>
            <person name="Nishikawa T."/>
            <person name="Otsuki T."/>
            <person name="Sugiyama T."/>
            <person name="Irie R."/>
            <person name="Wakamatsu A."/>
            <person name="Hayashi K."/>
            <person name="Sato H."/>
            <person name="Nagai K."/>
            <person name="Kimura K."/>
            <person name="Makita H."/>
            <person name="Sekine M."/>
            <person name="Obayashi M."/>
            <person name="Nishi T."/>
            <person name="Shibahara T."/>
            <person name="Tanaka T."/>
            <person name="Ishii S."/>
            <person name="Yamamoto J."/>
            <person name="Saito K."/>
            <person name="Kawai Y."/>
            <person name="Isono Y."/>
            <person name="Nakamura Y."/>
            <person name="Nagahari K."/>
            <person name="Murakami K."/>
            <person name="Yasuda T."/>
            <person name="Iwayanagi T."/>
            <person name="Wagatsuma M."/>
            <person name="Shiratori A."/>
            <person name="Sudo H."/>
            <person name="Hosoiri T."/>
            <person name="Kaku Y."/>
            <person name="Kodaira H."/>
            <person name="Kondo H."/>
            <person name="Sugawara M."/>
            <person name="Takahashi M."/>
            <person name="Kanda K."/>
            <person name="Yokoi T."/>
            <person name="Furuya T."/>
            <person name="Kikkawa E."/>
            <person name="Omura Y."/>
            <person name="Abe K."/>
            <person name="Kamihara K."/>
            <person name="Katsuta N."/>
            <person name="Sato K."/>
            <person name="Tanikawa M."/>
            <person name="Yamazaki M."/>
            <person name="Ninomiya K."/>
            <person name="Ishibashi T."/>
            <person name="Yamashita H."/>
            <person name="Murakawa K."/>
            <person name="Fujimori K."/>
            <person name="Tanai H."/>
            <person name="Kimata M."/>
            <person name="Watanabe M."/>
            <person name="Hiraoka S."/>
            <person name="Chiba Y."/>
            <person name="Ishida S."/>
            <person name="Ono Y."/>
            <person name="Takiguchi S."/>
            <person name="Watanabe S."/>
            <person name="Yosida M."/>
            <person name="Hotuta T."/>
            <person name="Kusano J."/>
            <person name="Kanehori K."/>
            <person name="Takahashi-Fujii A."/>
            <person name="Hara H."/>
            <person name="Tanase T.-O."/>
            <person name="Nomura Y."/>
            <person name="Togiya S."/>
            <person name="Komai F."/>
            <person name="Hara R."/>
            <person name="Takeuchi K."/>
            <person name="Arita M."/>
            <person name="Imose N."/>
            <person name="Musashino K."/>
            <person name="Yuuki H."/>
            <person name="Oshima A."/>
            <person name="Sasaki N."/>
            <person name="Aotsuka S."/>
            <person name="Yoshikawa Y."/>
            <person name="Matsunawa H."/>
            <person name="Ichihara T."/>
            <person name="Shiohata N."/>
            <person name="Sano S."/>
            <person name="Moriya S."/>
            <person name="Momiyama H."/>
            <person name="Satoh N."/>
            <person name="Takami S."/>
            <person name="Terashima Y."/>
            <person name="Suzuki O."/>
            <person name="Nakagawa S."/>
            <person name="Senoh A."/>
            <person name="Mizoguchi H."/>
            <person name="Goto Y."/>
            <person name="Shimizu F."/>
            <person name="Wakebe H."/>
            <person name="Hishigaki H."/>
            <person name="Watanabe T."/>
            <person name="Sugiyama A."/>
            <person name="Takemoto M."/>
            <person name="Kawakami B."/>
            <person name="Yamazaki M."/>
            <person name="Watanabe K."/>
            <person name="Kumagai A."/>
            <person name="Itakura S."/>
            <person name="Fukuzumi Y."/>
            <person name="Fujimori Y."/>
            <person name="Komiyama M."/>
            <person name="Tashiro H."/>
            <person name="Tanigami A."/>
            <person name="Fujiwara T."/>
            <person name="Ono T."/>
            <person name="Yamada K."/>
            <person name="Fujii Y."/>
            <person name="Ozaki K."/>
            <person name="Hirao M."/>
            <person name="Ohmori Y."/>
            <person name="Kawabata A."/>
            <person name="Hikiji T."/>
            <person name="Kobatake N."/>
            <person name="Inagaki H."/>
            <person name="Ikema Y."/>
            <person name="Okamoto S."/>
            <person name="Okitani R."/>
            <person name="Kawakami T."/>
            <person name="Noguchi S."/>
            <person name="Itoh T."/>
            <person name="Shigeta K."/>
            <person name="Senba T."/>
            <person name="Matsumura K."/>
            <person name="Nakajima Y."/>
            <person name="Mizuno T."/>
            <person name="Morinaga M."/>
            <person name="Sasaki M."/>
            <person name="Togashi T."/>
            <person name="Oyama M."/>
            <person name="Hata H."/>
            <person name="Watanabe M."/>
            <person name="Komatsu T."/>
            <person name="Mizushima-Sugano J."/>
            <person name="Satoh T."/>
            <person name="Shirai Y."/>
            <person name="Takahashi Y."/>
            <person name="Nakagawa K."/>
            <person name="Okumura K."/>
            <person name="Nagase T."/>
            <person name="Nomura N."/>
            <person name="Kikuchi H."/>
            <person name="Masuho Y."/>
            <person name="Yamashita R."/>
            <person name="Nakai K."/>
            <person name="Yada T."/>
            <person name="Nakamura Y."/>
            <person name="Ohara O."/>
            <person name="Isogai T."/>
            <person name="Sugano S."/>
        </authorList>
    </citation>
    <scope>NUCLEOTIDE SEQUENCE [LARGE SCALE MRNA]</scope>
    <source>
        <tissue>Hippocampus</tissue>
    </source>
</reference>
<reference key="2">
    <citation type="journal article" date="2004" name="Genome Res.">
        <title>The status, quality, and expansion of the NIH full-length cDNA project: the Mammalian Gene Collection (MGC).</title>
        <authorList>
            <consortium name="The MGC Project Team"/>
        </authorList>
    </citation>
    <scope>NUCLEOTIDE SEQUENCE [LARGE SCALE MRNA]</scope>
    <scope>VARIANT ARG-51</scope>
    <source>
        <tissue>Brain</tissue>
        <tissue>Lung</tissue>
        <tissue>Skin</tissue>
    </source>
</reference>
<protein>
    <recommendedName>
        <fullName>Uncharacterized protein C12orf60</fullName>
    </recommendedName>
</protein>